<comment type="function">
    <text evidence="1">Part of the ABC transporter complex LsrABCD involved in autoinducer 2 (AI-2) import. Probably responsible for the translocation of the substrate across the membrane (By similarity).</text>
</comment>
<comment type="subunit">
    <text evidence="1">The complex is composed of two ATP-binding proteins (LsrA), two transmembrane proteins (LsrC and LsrD) and a solute-binding protein (LsrB).</text>
</comment>
<comment type="subcellular location">
    <subcellularLocation>
        <location evidence="1">Cell inner membrane</location>
        <topology evidence="1">Multi-pass membrane protein</topology>
    </subcellularLocation>
</comment>
<comment type="similarity">
    <text evidence="3">Belongs to the binding-protein-dependent transport system permease family. AraH/RbsC subfamily.</text>
</comment>
<dbReference type="EMBL" id="AE005674">
    <property type="protein sequence ID" value="AAN43172.1"/>
    <property type="molecule type" value="Genomic_DNA"/>
</dbReference>
<dbReference type="EMBL" id="AE014073">
    <property type="protein sequence ID" value="AAP17064.1"/>
    <property type="molecule type" value="Genomic_DNA"/>
</dbReference>
<dbReference type="RefSeq" id="WP_001222721.1">
    <property type="nucleotide sequence ID" value="NZ_WPGW01000160.1"/>
</dbReference>
<dbReference type="STRING" id="198214.SF1585"/>
<dbReference type="PaxDb" id="198214-SF1585"/>
<dbReference type="GeneID" id="75202157"/>
<dbReference type="KEGG" id="sfl:SF1585"/>
<dbReference type="KEGG" id="sfx:S1711"/>
<dbReference type="PATRIC" id="fig|198214.7.peg.1874"/>
<dbReference type="HOGENOM" id="CLU_028880_0_0_6"/>
<dbReference type="Proteomes" id="UP000001006">
    <property type="component" value="Chromosome"/>
</dbReference>
<dbReference type="Proteomes" id="UP000002673">
    <property type="component" value="Chromosome"/>
</dbReference>
<dbReference type="GO" id="GO:0005886">
    <property type="term" value="C:plasma membrane"/>
    <property type="evidence" value="ECO:0007669"/>
    <property type="project" value="UniProtKB-SubCell"/>
</dbReference>
<dbReference type="GO" id="GO:0022857">
    <property type="term" value="F:transmembrane transporter activity"/>
    <property type="evidence" value="ECO:0007669"/>
    <property type="project" value="InterPro"/>
</dbReference>
<dbReference type="CDD" id="cd06579">
    <property type="entry name" value="TM_PBP1_transp_AraH_like"/>
    <property type="match status" value="1"/>
</dbReference>
<dbReference type="InterPro" id="IPR001851">
    <property type="entry name" value="ABC_transp_permease"/>
</dbReference>
<dbReference type="NCBIfam" id="NF011612">
    <property type="entry name" value="PRK15038.1"/>
    <property type="match status" value="1"/>
</dbReference>
<dbReference type="PANTHER" id="PTHR32196">
    <property type="entry name" value="ABC TRANSPORTER PERMEASE PROTEIN YPHD-RELATED-RELATED"/>
    <property type="match status" value="1"/>
</dbReference>
<dbReference type="PANTHER" id="PTHR32196:SF71">
    <property type="entry name" value="AUTOINDUCER 2 IMPORT SYSTEM PERMEASE PROTEIN LSRD"/>
    <property type="match status" value="1"/>
</dbReference>
<dbReference type="Pfam" id="PF02653">
    <property type="entry name" value="BPD_transp_2"/>
    <property type="match status" value="1"/>
</dbReference>
<accession>P0AFS2</accession>
<accession>P76881</accession>
<accession>P77651</accession>
<gene>
    <name type="primary">lsrD</name>
    <name type="ordered locus">SF1584.1</name>
    <name type="ordered locus">S1711</name>
</gene>
<feature type="chain" id="PRO_0000060249" description="Autoinducer 2 import system permease protein LsrD">
    <location>
        <begin position="1"/>
        <end position="330"/>
    </location>
</feature>
<feature type="topological domain" description="Cytoplasmic" evidence="2">
    <location>
        <begin position="1"/>
        <end position="4"/>
    </location>
</feature>
<feature type="transmembrane region" description="Helical" evidence="2">
    <location>
        <begin position="5"/>
        <end position="25"/>
    </location>
</feature>
<feature type="topological domain" description="Periplasmic" evidence="2">
    <location>
        <begin position="26"/>
        <end position="42"/>
    </location>
</feature>
<feature type="transmembrane region" description="Helical" evidence="2">
    <location>
        <begin position="43"/>
        <end position="63"/>
    </location>
</feature>
<feature type="topological domain" description="Cytoplasmic" evidence="2">
    <location>
        <begin position="64"/>
        <end position="67"/>
    </location>
</feature>
<feature type="transmembrane region" description="Helical" evidence="2">
    <location>
        <begin position="68"/>
        <end position="88"/>
    </location>
</feature>
<feature type="transmembrane region" description="Helical" evidence="2">
    <location>
        <begin position="89"/>
        <end position="109"/>
    </location>
</feature>
<feature type="topological domain" description="Cytoplasmic" evidence="2">
    <location>
        <begin position="110"/>
        <end position="115"/>
    </location>
</feature>
<feature type="transmembrane region" description="Helical" evidence="2">
    <location>
        <begin position="116"/>
        <end position="136"/>
    </location>
</feature>
<feature type="topological domain" description="Periplasmic" evidence="2">
    <location>
        <begin position="137"/>
        <end position="159"/>
    </location>
</feature>
<feature type="transmembrane region" description="Helical" evidence="2">
    <location>
        <begin position="160"/>
        <end position="180"/>
    </location>
</feature>
<feature type="topological domain" description="Cytoplasmic" evidence="2">
    <location>
        <begin position="181"/>
        <end position="209"/>
    </location>
</feature>
<feature type="transmembrane region" description="Helical" evidence="2">
    <location>
        <begin position="210"/>
        <end position="230"/>
    </location>
</feature>
<feature type="topological domain" description="Periplasmic" evidence="2">
    <location>
        <begin position="231"/>
        <end position="237"/>
    </location>
</feature>
<feature type="transmembrane region" description="Helical" evidence="2">
    <location>
        <begin position="238"/>
        <end position="258"/>
    </location>
</feature>
<feature type="transmembrane region" description="Helical" evidence="2">
    <location>
        <begin position="259"/>
        <end position="279"/>
    </location>
</feature>
<feature type="topological domain" description="Periplasmic" evidence="2">
    <location>
        <begin position="280"/>
        <end position="285"/>
    </location>
</feature>
<feature type="transmembrane region" description="Helical" evidence="2">
    <location>
        <begin position="286"/>
        <end position="306"/>
    </location>
</feature>
<feature type="topological domain" description="Cytoplasmic" evidence="2">
    <location>
        <begin position="307"/>
        <end position="330"/>
    </location>
</feature>
<sequence length="330" mass="34456">MRIRYGWELALAALLVIEIVAFGAINPRMLDLNMLLFSTSDFICIGIVALPLTMVIVSGGIDISFGSTIGLCAIALGVLFQSGVPMPLAILLTLLLGALCGLINAGLIIYTKVNPLVITLGTLYLFAGSALLLSGMAGATGYEGIGGFPMAFTDFANLDVLGLPVPLIIFLICLLVFWLWLHKTHAGRNVFLIGQSPRVALYSAIPVNRTLCALYAMTGLASAVAAVLLVSYFGSARSDLGASFLMPAITAVVLGGANIYGGSGSIIGTAIAVLLVGYLQQGLQMAGVPNQVSSALSGALLIVVVVGRSVSLHRQQIKEWLARRANNPLP</sequence>
<reference key="1">
    <citation type="journal article" date="2002" name="Nucleic Acids Res.">
        <title>Genome sequence of Shigella flexneri 2a: insights into pathogenicity through comparison with genomes of Escherichia coli K12 and O157.</title>
        <authorList>
            <person name="Jin Q."/>
            <person name="Yuan Z."/>
            <person name="Xu J."/>
            <person name="Wang Y."/>
            <person name="Shen Y."/>
            <person name="Lu W."/>
            <person name="Wang J."/>
            <person name="Liu H."/>
            <person name="Yang J."/>
            <person name="Yang F."/>
            <person name="Zhang X."/>
            <person name="Zhang J."/>
            <person name="Yang G."/>
            <person name="Wu H."/>
            <person name="Qu D."/>
            <person name="Dong J."/>
            <person name="Sun L."/>
            <person name="Xue Y."/>
            <person name="Zhao A."/>
            <person name="Gao Y."/>
            <person name="Zhu J."/>
            <person name="Kan B."/>
            <person name="Ding K."/>
            <person name="Chen S."/>
            <person name="Cheng H."/>
            <person name="Yao Z."/>
            <person name="He B."/>
            <person name="Chen R."/>
            <person name="Ma D."/>
            <person name="Qiang B."/>
            <person name="Wen Y."/>
            <person name="Hou Y."/>
            <person name="Yu J."/>
        </authorList>
    </citation>
    <scope>NUCLEOTIDE SEQUENCE [LARGE SCALE GENOMIC DNA]</scope>
    <source>
        <strain>301 / Serotype 2a</strain>
    </source>
</reference>
<reference key="2">
    <citation type="journal article" date="2003" name="Infect. Immun.">
        <title>Complete genome sequence and comparative genomics of Shigella flexneri serotype 2a strain 2457T.</title>
        <authorList>
            <person name="Wei J."/>
            <person name="Goldberg M.B."/>
            <person name="Burland V."/>
            <person name="Venkatesan M.M."/>
            <person name="Deng W."/>
            <person name="Fournier G."/>
            <person name="Mayhew G.F."/>
            <person name="Plunkett G. III"/>
            <person name="Rose D.J."/>
            <person name="Darling A."/>
            <person name="Mau B."/>
            <person name="Perna N.T."/>
            <person name="Payne S.M."/>
            <person name="Runyen-Janecky L.J."/>
            <person name="Zhou S."/>
            <person name="Schwartz D.C."/>
            <person name="Blattner F.R."/>
        </authorList>
    </citation>
    <scope>NUCLEOTIDE SEQUENCE [LARGE SCALE GENOMIC DNA]</scope>
    <source>
        <strain>ATCC 700930 / 2457T / Serotype 2a</strain>
    </source>
</reference>
<protein>
    <recommendedName>
        <fullName>Autoinducer 2 import system permease protein LsrD</fullName>
        <shortName>AI-2 import system permease protein LsrD</shortName>
    </recommendedName>
</protein>
<evidence type="ECO:0000250" key="1"/>
<evidence type="ECO:0000255" key="2"/>
<evidence type="ECO:0000305" key="3"/>
<organism>
    <name type="scientific">Shigella flexneri</name>
    <dbReference type="NCBI Taxonomy" id="623"/>
    <lineage>
        <taxon>Bacteria</taxon>
        <taxon>Pseudomonadati</taxon>
        <taxon>Pseudomonadota</taxon>
        <taxon>Gammaproteobacteria</taxon>
        <taxon>Enterobacterales</taxon>
        <taxon>Enterobacteriaceae</taxon>
        <taxon>Shigella</taxon>
    </lineage>
</organism>
<name>LSRD_SHIFL</name>
<proteinExistence type="inferred from homology"/>
<keyword id="KW-0997">Cell inner membrane</keyword>
<keyword id="KW-1003">Cell membrane</keyword>
<keyword id="KW-0472">Membrane</keyword>
<keyword id="KW-1185">Reference proteome</keyword>
<keyword id="KW-0812">Transmembrane</keyword>
<keyword id="KW-1133">Transmembrane helix</keyword>
<keyword id="KW-0813">Transport</keyword>